<organism>
    <name type="scientific">Coffea arabica</name>
    <name type="common">Arabian coffee</name>
    <dbReference type="NCBI Taxonomy" id="13443"/>
    <lineage>
        <taxon>Eukaryota</taxon>
        <taxon>Viridiplantae</taxon>
        <taxon>Streptophyta</taxon>
        <taxon>Embryophyta</taxon>
        <taxon>Tracheophyta</taxon>
        <taxon>Spermatophyta</taxon>
        <taxon>Magnoliopsida</taxon>
        <taxon>eudicotyledons</taxon>
        <taxon>Gunneridae</taxon>
        <taxon>Pentapetalae</taxon>
        <taxon>asterids</taxon>
        <taxon>lamiids</taxon>
        <taxon>Gentianales</taxon>
        <taxon>Rubiaceae</taxon>
        <taxon>Ixoroideae</taxon>
        <taxon>Gardenieae complex</taxon>
        <taxon>Bertiereae - Coffeeae clade</taxon>
        <taxon>Coffeeae</taxon>
        <taxon>Coffea</taxon>
    </lineage>
</organism>
<accession>A0A321</accession>
<geneLocation type="chloroplast"/>
<reference key="1">
    <citation type="journal article" date="2007" name="Plant Biotechnol. J.">
        <title>The complete nucleotide sequence of the coffee (Coffea arabica L.) chloroplast genome: organization and implications for biotechnology and phylogenetic relationships amongst angiosperms.</title>
        <authorList>
            <person name="Samson N."/>
            <person name="Bausher M.G."/>
            <person name="Lee S.-B."/>
            <person name="Jansen R.K."/>
            <person name="Daniell H."/>
        </authorList>
    </citation>
    <scope>NUCLEOTIDE SEQUENCE [LARGE SCALE GENOMIC DNA]</scope>
</reference>
<keyword id="KW-0066">ATP synthesis</keyword>
<keyword id="KW-0138">CF(0)</keyword>
<keyword id="KW-0150">Chloroplast</keyword>
<keyword id="KW-0375">Hydrogen ion transport</keyword>
<keyword id="KW-0406">Ion transport</keyword>
<keyword id="KW-0472">Membrane</keyword>
<keyword id="KW-0934">Plastid</keyword>
<keyword id="KW-1185">Reference proteome</keyword>
<keyword id="KW-0793">Thylakoid</keyword>
<keyword id="KW-0812">Transmembrane</keyword>
<keyword id="KW-1133">Transmembrane helix</keyword>
<keyword id="KW-0813">Transport</keyword>
<name>ATPF_COFAR</name>
<sequence>MKNVTDSFLSLGHWPFAGSFGFFNTDILSTNLINLSVVLGVLIFFGKGVCASCLLSDLLDNRKQRILNTIRNSEELRGGAIEQLEKARTRLRKVEMEADQFRVNGYSEIEREKLNLINSIYKTLEQLENYKNETIQFEQQRTINQVRQRVFQQALQGALGTLNSCLNNELHLRTISANIGILGSIKEKTD</sequence>
<comment type="function">
    <text evidence="1">F(1)F(0) ATP synthase produces ATP from ADP in the presence of a proton or sodium gradient. F-type ATPases consist of two structural domains, F(1) containing the extramembraneous catalytic core and F(0) containing the membrane proton channel, linked together by a central stalk and a peripheral stalk. During catalysis, ATP synthesis in the catalytic domain of F(1) is coupled via a rotary mechanism of the central stalk subunits to proton translocation.</text>
</comment>
<comment type="function">
    <text evidence="1">Component of the F(0) channel, it forms part of the peripheral stalk, linking F(1) to F(0).</text>
</comment>
<comment type="subunit">
    <text evidence="1">F-type ATPases have 2 components, F(1) - the catalytic core - and F(0) - the membrane proton channel. F(1) has five subunits: alpha(3), beta(3), gamma(1), delta(1), epsilon(1). F(0) has four main subunits: a(1), b(1), b'(1) and c(10-14). The alpha and beta chains form an alternating ring which encloses part of the gamma chain. F(1) is attached to F(0) by a central stalk formed by the gamma and epsilon chains, while a peripheral stalk is formed by the delta, b and b' chains.</text>
</comment>
<comment type="subcellular location">
    <subcellularLocation>
        <location evidence="1">Plastid</location>
        <location evidence="1">Chloroplast thylakoid membrane</location>
        <topology evidence="1">Single-pass membrane protein</topology>
    </subcellularLocation>
</comment>
<comment type="miscellaneous">
    <text>In plastids the F-type ATPase is also known as CF(1)CF(0).</text>
</comment>
<comment type="similarity">
    <text evidence="1">Belongs to the ATPase B chain family.</text>
</comment>
<protein>
    <recommendedName>
        <fullName evidence="1">ATP synthase subunit b, chloroplastic</fullName>
    </recommendedName>
    <alternativeName>
        <fullName evidence="1">ATP synthase F(0) sector subunit b</fullName>
    </alternativeName>
    <alternativeName>
        <fullName evidence="1">ATPase subunit I</fullName>
    </alternativeName>
</protein>
<feature type="chain" id="PRO_0000368921" description="ATP synthase subunit b, chloroplastic">
    <location>
        <begin position="1"/>
        <end position="190"/>
    </location>
</feature>
<feature type="transmembrane region" description="Helical" evidence="1">
    <location>
        <begin position="35"/>
        <end position="55"/>
    </location>
</feature>
<dbReference type="EMBL" id="EF044213">
    <property type="protein sequence ID" value="ABJ89665.1"/>
    <property type="molecule type" value="Genomic_DNA"/>
</dbReference>
<dbReference type="RefSeq" id="YP_817468.1">
    <property type="nucleotide sequence ID" value="NC_008535.1"/>
</dbReference>
<dbReference type="SMR" id="A0A321"/>
<dbReference type="GeneID" id="4421813"/>
<dbReference type="OrthoDB" id="1900203at2759"/>
<dbReference type="Proteomes" id="UP000515148">
    <property type="component" value="Chloroplast Pltd"/>
</dbReference>
<dbReference type="GO" id="GO:0009535">
    <property type="term" value="C:chloroplast thylakoid membrane"/>
    <property type="evidence" value="ECO:0007669"/>
    <property type="project" value="UniProtKB-SubCell"/>
</dbReference>
<dbReference type="GO" id="GO:0045259">
    <property type="term" value="C:proton-transporting ATP synthase complex"/>
    <property type="evidence" value="ECO:0007669"/>
    <property type="project" value="UniProtKB-KW"/>
</dbReference>
<dbReference type="GO" id="GO:0046933">
    <property type="term" value="F:proton-transporting ATP synthase activity, rotational mechanism"/>
    <property type="evidence" value="ECO:0007669"/>
    <property type="project" value="UniProtKB-UniRule"/>
</dbReference>
<dbReference type="CDD" id="cd06503">
    <property type="entry name" value="ATP-synt_Fo_b"/>
    <property type="match status" value="1"/>
</dbReference>
<dbReference type="HAMAP" id="MF_01398">
    <property type="entry name" value="ATP_synth_b_bprime"/>
    <property type="match status" value="1"/>
</dbReference>
<dbReference type="InterPro" id="IPR002146">
    <property type="entry name" value="ATP_synth_b/b'su_bac/chlpt"/>
</dbReference>
<dbReference type="PANTHER" id="PTHR34264">
    <property type="entry name" value="ATP SYNTHASE SUBUNIT B, CHLOROPLASTIC"/>
    <property type="match status" value="1"/>
</dbReference>
<dbReference type="PANTHER" id="PTHR34264:SF3">
    <property type="entry name" value="ATP SYNTHASE SUBUNIT B, CHLOROPLASTIC"/>
    <property type="match status" value="1"/>
</dbReference>
<dbReference type="Pfam" id="PF00430">
    <property type="entry name" value="ATP-synt_B"/>
    <property type="match status" value="1"/>
</dbReference>
<proteinExistence type="inferred from homology"/>
<evidence type="ECO:0000255" key="1">
    <source>
        <dbReference type="HAMAP-Rule" id="MF_01398"/>
    </source>
</evidence>
<gene>
    <name evidence="1" type="primary">atpF</name>
</gene>